<sequence length="71" mass="8024">MKTQFAILLVALVLFQMFAQSEAIFGAIWNGIKSLFGRRALNNDLDLDGLDELFDGEISQADVDFLKELMR</sequence>
<accession>Q8MTX2</accession>
<proteinExistence type="evidence at protein level"/>
<protein>
    <recommendedName>
        <fullName evidence="3">Cytotoxic linear peptide IsCT2</fullName>
    </recommendedName>
    <alternativeName>
        <fullName evidence="5">Non-disulfide-bridged peptide 4.2</fullName>
        <shortName evidence="5">NDBP-4.2</shortName>
    </alternativeName>
    <alternativeName>
        <fullName evidence="4">Non-disulfide-bridged peptide 5.3</fullName>
        <shortName evidence="4">NDBP-5.3</shortName>
    </alternativeName>
    <component>
        <recommendedName>
            <fullName evidence="3">Cytotoxic linear peptide IsCT2f</fullName>
        </recommendedName>
    </component>
</protein>
<dbReference type="EMBL" id="AY050522">
    <property type="protein sequence ID" value="AAL12486.1"/>
    <property type="molecule type" value="mRNA"/>
</dbReference>
<dbReference type="SMR" id="Q8MTX2"/>
<dbReference type="GO" id="GO:0005576">
    <property type="term" value="C:extracellular region"/>
    <property type="evidence" value="ECO:0007669"/>
    <property type="project" value="UniProtKB-SubCell"/>
</dbReference>
<dbReference type="GO" id="GO:0016020">
    <property type="term" value="C:membrane"/>
    <property type="evidence" value="ECO:0007669"/>
    <property type="project" value="UniProtKB-KW"/>
</dbReference>
<dbReference type="GO" id="GO:0044218">
    <property type="term" value="C:other organism cell membrane"/>
    <property type="evidence" value="ECO:0007669"/>
    <property type="project" value="UniProtKB-KW"/>
</dbReference>
<dbReference type="GO" id="GO:0090729">
    <property type="term" value="F:toxin activity"/>
    <property type="evidence" value="ECO:0007669"/>
    <property type="project" value="UniProtKB-KW"/>
</dbReference>
<dbReference type="GO" id="GO:0042742">
    <property type="term" value="P:defense response to bacterium"/>
    <property type="evidence" value="ECO:0007669"/>
    <property type="project" value="UniProtKB-KW"/>
</dbReference>
<dbReference type="GO" id="GO:0031640">
    <property type="term" value="P:killing of cells of another organism"/>
    <property type="evidence" value="ECO:0007669"/>
    <property type="project" value="UniProtKB-KW"/>
</dbReference>
<feature type="signal peptide" evidence="2">
    <location>
        <begin position="1"/>
        <end position="23"/>
    </location>
</feature>
<feature type="peptide" id="PRO_0000035359" description="Cytotoxic linear peptide IsCT2" evidence="2">
    <location>
        <begin position="24"/>
        <end position="36"/>
    </location>
</feature>
<feature type="peptide" id="PRO_0000035360" description="Cytotoxic linear peptide IsCT2f" evidence="2">
    <location>
        <begin position="24"/>
        <end position="34"/>
    </location>
</feature>
<feature type="propeptide" id="PRO_0000035361" evidence="7">
    <location>
        <begin position="40"/>
        <end position="71"/>
    </location>
</feature>
<feature type="site" description="Important for antibacterial activity, and hemolysis activity" evidence="1">
    <location>
        <position position="29"/>
    </location>
</feature>
<feature type="modified residue" description="Phenylalanine amide" evidence="2">
    <location>
        <position position="36"/>
    </location>
</feature>
<keyword id="KW-0027">Amidation</keyword>
<keyword id="KW-0044">Antibiotic</keyword>
<keyword id="KW-0929">Antimicrobial</keyword>
<keyword id="KW-0165">Cleavage on pair of basic residues</keyword>
<keyword id="KW-0204">Cytolysis</keyword>
<keyword id="KW-0903">Direct protein sequencing</keyword>
<keyword id="KW-0472">Membrane</keyword>
<keyword id="KW-0964">Secreted</keyword>
<keyword id="KW-0732">Signal</keyword>
<keyword id="KW-1052">Target cell membrane</keyword>
<keyword id="KW-1053">Target membrane</keyword>
<keyword id="KW-0800">Toxin</keyword>
<organism>
    <name type="scientific">Opisthacanthus madagascariensis</name>
    <name type="common">Scorpion</name>
    <dbReference type="NCBI Taxonomy" id="167108"/>
    <lineage>
        <taxon>Eukaryota</taxon>
        <taxon>Metazoa</taxon>
        <taxon>Ecdysozoa</taxon>
        <taxon>Arthropoda</taxon>
        <taxon>Chelicerata</taxon>
        <taxon>Arachnida</taxon>
        <taxon>Scorpiones</taxon>
        <taxon>Iurida</taxon>
        <taxon>Scorpionoidea</taxon>
        <taxon>Hemiscorpiidae</taxon>
        <taxon>Opisthacanthus</taxon>
    </lineage>
</organism>
<reference key="1">
    <citation type="journal article" date="2002" name="Biochem. Biophys. Res. Commun.">
        <title>Purification, structure-function analysis, and molecular characterization of novel linear peptides from scorpion Opisthacanthus madagascariensis.</title>
        <authorList>
            <person name="Dai L."/>
            <person name="Corzo G."/>
            <person name="Naoki H."/>
            <person name="Andriantsiferana M."/>
            <person name="Nakajima T."/>
        </authorList>
    </citation>
    <scope>NUCLEOTIDE SEQUENCE [MRNA]</scope>
    <scope>PROTEIN SEQUENCE OF 24-36</scope>
    <scope>FUNCTION</scope>
    <scope>MASS SPECTROMETRY</scope>
    <scope>SYNTHESIS</scope>
    <scope>SUBCELLULAR LOCATION</scope>
    <scope>AMIDATION AT PHE-36</scope>
    <source>
        <tissue>Venom</tissue>
        <tissue>Venom gland</tissue>
    </source>
</reference>
<reference key="2">
    <citation type="journal article" date="2005" name="IUBMB Life">
        <title>Scorpion venom peptides without disulfide bridges.</title>
        <authorList>
            <person name="Zeng X.C."/>
            <person name="Corzo G."/>
            <person name="Hahin R."/>
        </authorList>
    </citation>
    <scope>NOMENCLATURE</scope>
</reference>
<reference key="3">
    <citation type="journal article" date="2014" name="Peptides">
        <title>Scorpion venom peptides with no disulfide bridges: a review.</title>
        <authorList>
            <person name="Almaaytah A."/>
            <person name="Albalas Q."/>
        </authorList>
    </citation>
    <scope>NOMENCLATURE</scope>
</reference>
<name>NDB42_OPIMA</name>
<comment type="function">
    <text evidence="2">IsCT2 shows weak hemolytic activity and antibacterial activity against both Gram-positive and Gram-negative bacteria probably by forming pores in the cell membrane. IsCT2 adopts an amphipathic alpha-helical structure.</text>
</comment>
<comment type="function">
    <text evidence="2">IsCT2f shows neither hemolytic, nor antibacterial activities, surely due to the fact that it cannot apply amphipathic alpha-helical structure.</text>
</comment>
<comment type="subcellular location">
    <subcellularLocation>
        <location evidence="2">Secreted</location>
    </subcellularLocation>
    <subcellularLocation>
        <location evidence="1">Target cell membrane</location>
    </subcellularLocation>
    <text evidence="1">Forms a helical membrane channel in the prey.</text>
</comment>
<comment type="tissue specificity">
    <text evidence="7">Expressed by the venom gland.</text>
</comment>
<comment type="PTM">
    <text evidence="7">IsCT2F is an enzymatic proteolytic cleavage product of IsCT2 by the proteases present in the venom.</text>
</comment>
<comment type="mass spectrometry" mass="1463.92" method="MALDI" evidence="2">
    <molecule>Cytotoxic linear peptide IsCT2</molecule>
</comment>
<comment type="mass spectrometry" mass="1204.74" method="MALDI" evidence="2">
    <molecule>Cytotoxic linear peptide IsCT2f</molecule>
</comment>
<comment type="similarity">
    <text evidence="6">Belongs to the non-disulfide-bridged peptide (NDBP) superfamily. Short antimicrobial peptide (group 4) family.</text>
</comment>
<evidence type="ECO:0000250" key="1"/>
<evidence type="ECO:0000269" key="2">
    <source>
    </source>
</evidence>
<evidence type="ECO:0000303" key="3">
    <source>
    </source>
</evidence>
<evidence type="ECO:0000303" key="4">
    <source>
    </source>
</evidence>
<evidence type="ECO:0000303" key="5">
    <source>
    </source>
</evidence>
<evidence type="ECO:0000305" key="6"/>
<evidence type="ECO:0000305" key="7">
    <source>
    </source>
</evidence>